<gene>
    <name type="primary">dnaK</name>
</gene>
<protein>
    <recommendedName>
        <fullName>Chaperone protein DnaK</fullName>
    </recommendedName>
    <alternativeName>
        <fullName>HSP70</fullName>
    </alternativeName>
    <alternativeName>
        <fullName>Heat shock 70 kDa protein</fullName>
    </alternativeName>
    <alternativeName>
        <fullName>Heat shock protein 70</fullName>
    </alternativeName>
</protein>
<evidence type="ECO:0000250" key="1"/>
<evidence type="ECO:0000305" key="2"/>
<name>DNAK_AQUPY</name>
<comment type="function">
    <text evidence="1">Acts as a chaperone.</text>
</comment>
<comment type="induction">
    <text evidence="1">By stress conditions e.g. heat shock (By similarity).</text>
</comment>
<comment type="similarity">
    <text evidence="2">Belongs to the heat shock protein 70 family.</text>
</comment>
<proteinExistence type="inferred from homology"/>
<organism>
    <name type="scientific">Aquifex pyrophilus</name>
    <dbReference type="NCBI Taxonomy" id="2714"/>
    <lineage>
        <taxon>Bacteria</taxon>
        <taxon>Pseudomonadati</taxon>
        <taxon>Aquificota</taxon>
        <taxon>Aquificia</taxon>
        <taxon>Aquificales</taxon>
        <taxon>Aquificaceae</taxon>
        <taxon>Aquifex</taxon>
    </lineage>
</organism>
<accession>O86103</accession>
<reference key="1">
    <citation type="journal article" date="1999" name="J. Bacteriol.">
        <title>Discontinuous occurrence of the hsp70 (dnaK) gene among Archaea and sequence features of HSP70 suggest a novel outlook on phylogenies inferred from this protein.</title>
        <authorList>
            <person name="Gribaldo S."/>
            <person name="Lumia V."/>
            <person name="Creti R."/>
            <person name="de Macario E.C."/>
            <person name="Sanangelantoni A.M."/>
            <person name="Cammarano P."/>
        </authorList>
    </citation>
    <scope>NUCLEOTIDE SEQUENCE [GENOMIC DNA]</scope>
</reference>
<sequence>MAGKGKIIGIDLGNETNSVVAVMMGDEAVVIQNQEGSRLTPSVVSWTKEKEVLVGDPAKRRAILDPENTVYESKRFIGRKFEEVKEEAKRVSYKVVPDEKGDAAFDIPNAGKLVRPEEVGAHVLRKLKEAAEAFLGEPVKKAVITVPAYFNERQRQATKDAGKIAGLEVVRILNEPTRAAMAYGLHKKENVRILVYDFGGGTFDVSILEGGDGVIEVKATAGDTHLGGANIDERIMEWLIEEFKKEHGIDLRQDRTALQRLKEAAEQAKKELSFKMETEINLPFITIDPNTNQPLHLQKKLTRARLEEMINDLIDRTIDIVKQALEDANVKPSDIDEVVLVGGSTRIPLVQQKIKEFFGKEPHKGLNPDEVVAMGAAIQAGVLAGEVKEIVLVDVTPLELGVETYGGVMTVLIPRNTPIPVKKSKVFTTAHDYQTEVEIHVLHGERPLAKDNKSLAKFYLTGIPPAPRGVPKIEVCFDIDADGILHVTAKDLGTGKEQSVRVEISSGLTPEEIERIIKEAEETREEDRKKKELIEAKNQLDHLVYQLEKTLKEAGDKVPADVKQEAEKVIEEAKKTIETATDINEAKELQKEFSRYPQSSEQPFT</sequence>
<dbReference type="EMBL" id="AJ005800">
    <property type="protein sequence ID" value="CAA06703.1"/>
    <property type="molecule type" value="Genomic_DNA"/>
</dbReference>
<dbReference type="SMR" id="O86103"/>
<dbReference type="GO" id="GO:0005524">
    <property type="term" value="F:ATP binding"/>
    <property type="evidence" value="ECO:0007669"/>
    <property type="project" value="UniProtKB-KW"/>
</dbReference>
<dbReference type="GO" id="GO:0140662">
    <property type="term" value="F:ATP-dependent protein folding chaperone"/>
    <property type="evidence" value="ECO:0007669"/>
    <property type="project" value="InterPro"/>
</dbReference>
<dbReference type="GO" id="GO:0051082">
    <property type="term" value="F:unfolded protein binding"/>
    <property type="evidence" value="ECO:0007669"/>
    <property type="project" value="InterPro"/>
</dbReference>
<dbReference type="CDD" id="cd10234">
    <property type="entry name" value="ASKHA_NBD_HSP70_DnaK-like"/>
    <property type="match status" value="1"/>
</dbReference>
<dbReference type="FunFam" id="2.60.34.10:FF:000014">
    <property type="entry name" value="Chaperone protein DnaK HSP70"/>
    <property type="match status" value="1"/>
</dbReference>
<dbReference type="FunFam" id="1.20.1270.10:FF:000001">
    <property type="entry name" value="Molecular chaperone DnaK"/>
    <property type="match status" value="1"/>
</dbReference>
<dbReference type="FunFam" id="3.30.420.40:FF:000004">
    <property type="entry name" value="Molecular chaperone DnaK"/>
    <property type="match status" value="1"/>
</dbReference>
<dbReference type="FunFam" id="3.90.640.10:FF:000003">
    <property type="entry name" value="Molecular chaperone DnaK"/>
    <property type="match status" value="1"/>
</dbReference>
<dbReference type="Gene3D" id="3.30.420.40">
    <property type="match status" value="2"/>
</dbReference>
<dbReference type="Gene3D" id="3.90.640.10">
    <property type="entry name" value="Actin, Chain A, domain 4"/>
    <property type="match status" value="1"/>
</dbReference>
<dbReference type="Gene3D" id="2.60.34.10">
    <property type="entry name" value="Substrate Binding Domain Of DNAk, Chain A, domain 1"/>
    <property type="match status" value="1"/>
</dbReference>
<dbReference type="HAMAP" id="MF_00332">
    <property type="entry name" value="DnaK"/>
    <property type="match status" value="1"/>
</dbReference>
<dbReference type="InterPro" id="IPR043129">
    <property type="entry name" value="ATPase_NBD"/>
</dbReference>
<dbReference type="InterPro" id="IPR012725">
    <property type="entry name" value="Chaperone_DnaK"/>
</dbReference>
<dbReference type="InterPro" id="IPR018181">
    <property type="entry name" value="Heat_shock_70_CS"/>
</dbReference>
<dbReference type="InterPro" id="IPR029048">
    <property type="entry name" value="HSP70_C_sf"/>
</dbReference>
<dbReference type="InterPro" id="IPR029047">
    <property type="entry name" value="HSP70_peptide-bd_sf"/>
</dbReference>
<dbReference type="InterPro" id="IPR013126">
    <property type="entry name" value="Hsp_70_fam"/>
</dbReference>
<dbReference type="NCBIfam" id="NF001413">
    <property type="entry name" value="PRK00290.1"/>
    <property type="match status" value="1"/>
</dbReference>
<dbReference type="NCBIfam" id="TIGR02350">
    <property type="entry name" value="prok_dnaK"/>
    <property type="match status" value="1"/>
</dbReference>
<dbReference type="PANTHER" id="PTHR19375">
    <property type="entry name" value="HEAT SHOCK PROTEIN 70KDA"/>
    <property type="match status" value="1"/>
</dbReference>
<dbReference type="Pfam" id="PF00012">
    <property type="entry name" value="HSP70"/>
    <property type="match status" value="1"/>
</dbReference>
<dbReference type="PRINTS" id="PR00301">
    <property type="entry name" value="HEATSHOCK70"/>
</dbReference>
<dbReference type="SUPFAM" id="SSF53067">
    <property type="entry name" value="Actin-like ATPase domain"/>
    <property type="match status" value="2"/>
</dbReference>
<dbReference type="SUPFAM" id="SSF100934">
    <property type="entry name" value="Heat shock protein 70kD (HSP70), C-terminal subdomain"/>
    <property type="match status" value="1"/>
</dbReference>
<dbReference type="SUPFAM" id="SSF100920">
    <property type="entry name" value="Heat shock protein 70kD (HSP70), peptide-binding domain"/>
    <property type="match status" value="1"/>
</dbReference>
<dbReference type="PROSITE" id="PS00329">
    <property type="entry name" value="HSP70_2"/>
    <property type="match status" value="1"/>
</dbReference>
<dbReference type="PROSITE" id="PS01036">
    <property type="entry name" value="HSP70_3"/>
    <property type="match status" value="1"/>
</dbReference>
<feature type="chain" id="PRO_0000078413" description="Chaperone protein DnaK">
    <location>
        <begin position="1"/>
        <end position="605" status="greater than"/>
    </location>
</feature>
<feature type="modified residue" description="Phosphothreonine; by autocatalysis" evidence="1">
    <location>
        <position position="202"/>
    </location>
</feature>
<feature type="non-terminal residue">
    <location>
        <position position="605"/>
    </location>
</feature>
<keyword id="KW-0067">ATP-binding</keyword>
<keyword id="KW-0143">Chaperone</keyword>
<keyword id="KW-0547">Nucleotide-binding</keyword>
<keyword id="KW-0597">Phosphoprotein</keyword>
<keyword id="KW-0346">Stress response</keyword>